<keyword id="KW-0028">Amino-acid biosynthesis</keyword>
<keyword id="KW-0456">Lyase</keyword>
<keyword id="KW-0663">Pyridoxal phosphate</keyword>
<keyword id="KW-0791">Threonine biosynthesis</keyword>
<sequence length="429" mass="47094">MKLYNLKDHNEQVSFAQAIKQGLGKQQGLFFPLDLPEFELTEIDHLLEQDFVTRSSRILSAFIGEEVPETALKKRVQAAFEFPAPVAKVTDDVSCLELFHGPTLAFKDFGGRFMAQMLAEVAGEQPVTILTATSGDTGAAVAHAFYGLKNVRVVILYPQGKISPLQEKLFCTLGGNIHTVAIDGDFDACQALVKQAFDDQELKDALHLNSANSINISRLLAQICYYFEAVAQLPQEARNQLVISVPSGNFGDLTAGLLAKSLGLPVKRFIAATNANDTVPRFLTSGQWQPHATVATLSNAMDVSQPNNWPRVEELFRRKVWQLKELGHAAVSDETTKDTMRELAELGYISEPHAAIAYRALRDQLQEGEFGLFLGTAHPAKFKESVEAILGQELPLPKALALRAELPLLSHTLPASFGELRKFLMGLPA</sequence>
<feature type="chain" id="PRO_0000185640" description="Threonine synthase">
    <location>
        <begin position="1"/>
        <end position="429"/>
    </location>
</feature>
<feature type="modified residue" description="N6-(pyridoxal phosphate)lysine" evidence="1">
    <location>
        <position position="107"/>
    </location>
</feature>
<name>THRC_SERMA</name>
<organism>
    <name type="scientific">Serratia marcescens</name>
    <dbReference type="NCBI Taxonomy" id="615"/>
    <lineage>
        <taxon>Bacteria</taxon>
        <taxon>Pseudomonadati</taxon>
        <taxon>Pseudomonadota</taxon>
        <taxon>Gammaproteobacteria</taxon>
        <taxon>Enterobacterales</taxon>
        <taxon>Yersiniaceae</taxon>
        <taxon>Serratia</taxon>
    </lineage>
</organism>
<dbReference type="EC" id="4.2.3.1"/>
<dbReference type="EMBL" id="D10387">
    <property type="protein sequence ID" value="BAA01222.1"/>
    <property type="molecule type" value="Genomic_DNA"/>
</dbReference>
<dbReference type="EMBL" id="X60821">
    <property type="protein sequence ID" value="CAA43214.1"/>
    <property type="molecule type" value="Genomic_DNA"/>
</dbReference>
<dbReference type="PIR" id="D47057">
    <property type="entry name" value="S16043"/>
</dbReference>
<dbReference type="SMR" id="P27735"/>
<dbReference type="STRING" id="273526.SMDB11_0003"/>
<dbReference type="UniPathway" id="UPA00050">
    <property type="reaction ID" value="UER00065"/>
</dbReference>
<dbReference type="GO" id="GO:0030170">
    <property type="term" value="F:pyridoxal phosphate binding"/>
    <property type="evidence" value="ECO:0007669"/>
    <property type="project" value="InterPro"/>
</dbReference>
<dbReference type="GO" id="GO:0004795">
    <property type="term" value="F:threonine synthase activity"/>
    <property type="evidence" value="ECO:0007669"/>
    <property type="project" value="UniProtKB-EC"/>
</dbReference>
<dbReference type="GO" id="GO:0009088">
    <property type="term" value="P:threonine biosynthetic process"/>
    <property type="evidence" value="ECO:0007669"/>
    <property type="project" value="UniProtKB-UniPathway"/>
</dbReference>
<dbReference type="FunFam" id="3.40.50.1100:FF:000026">
    <property type="entry name" value="Threonine synthase"/>
    <property type="match status" value="1"/>
</dbReference>
<dbReference type="FunFam" id="3.90.1380.10:FF:000001">
    <property type="entry name" value="Threonine synthase"/>
    <property type="match status" value="1"/>
</dbReference>
<dbReference type="Gene3D" id="3.40.50.1100">
    <property type="match status" value="2"/>
</dbReference>
<dbReference type="Gene3D" id="3.90.1380.10">
    <property type="entry name" value="Threonine synthase, N-terminal domain"/>
    <property type="match status" value="1"/>
</dbReference>
<dbReference type="InterPro" id="IPR000634">
    <property type="entry name" value="Ser/Thr_deHydtase_PyrdxlP-BS"/>
</dbReference>
<dbReference type="InterPro" id="IPR029144">
    <property type="entry name" value="Thr_synth_N"/>
</dbReference>
<dbReference type="InterPro" id="IPR037158">
    <property type="entry name" value="Thr_synth_N_sf"/>
</dbReference>
<dbReference type="InterPro" id="IPR004450">
    <property type="entry name" value="Thr_synthase-like"/>
</dbReference>
<dbReference type="InterPro" id="IPR051166">
    <property type="entry name" value="Threonine_Synthase"/>
</dbReference>
<dbReference type="InterPro" id="IPR001926">
    <property type="entry name" value="TrpB-like_PALP"/>
</dbReference>
<dbReference type="InterPro" id="IPR036052">
    <property type="entry name" value="TrpB-like_PALP_sf"/>
</dbReference>
<dbReference type="NCBIfam" id="TIGR00260">
    <property type="entry name" value="thrC"/>
    <property type="match status" value="1"/>
</dbReference>
<dbReference type="PANTHER" id="PTHR42690">
    <property type="entry name" value="THREONINE SYNTHASE FAMILY MEMBER"/>
    <property type="match status" value="1"/>
</dbReference>
<dbReference type="PANTHER" id="PTHR42690:SF1">
    <property type="entry name" value="THREONINE SYNTHASE-LIKE 2"/>
    <property type="match status" value="1"/>
</dbReference>
<dbReference type="Pfam" id="PF00291">
    <property type="entry name" value="PALP"/>
    <property type="match status" value="1"/>
</dbReference>
<dbReference type="Pfam" id="PF14821">
    <property type="entry name" value="Thr_synth_N"/>
    <property type="match status" value="1"/>
</dbReference>
<dbReference type="SUPFAM" id="SSF53686">
    <property type="entry name" value="Tryptophan synthase beta subunit-like PLP-dependent enzymes"/>
    <property type="match status" value="1"/>
</dbReference>
<dbReference type="PROSITE" id="PS00165">
    <property type="entry name" value="DEHYDRATASE_SER_THR"/>
    <property type="match status" value="1"/>
</dbReference>
<comment type="function">
    <text evidence="1">Catalyzes the gamma-elimination of phosphate from L-phosphohomoserine and the beta-addition of water to produce L-threonine.</text>
</comment>
<comment type="catalytic activity">
    <reaction>
        <text>O-phospho-L-homoserine + H2O = L-threonine + phosphate</text>
        <dbReference type="Rhea" id="RHEA:10840"/>
        <dbReference type="ChEBI" id="CHEBI:15377"/>
        <dbReference type="ChEBI" id="CHEBI:43474"/>
        <dbReference type="ChEBI" id="CHEBI:57590"/>
        <dbReference type="ChEBI" id="CHEBI:57926"/>
        <dbReference type="EC" id="4.2.3.1"/>
    </reaction>
</comment>
<comment type="cofactor">
    <cofactor evidence="1">
        <name>pyridoxal 5'-phosphate</name>
        <dbReference type="ChEBI" id="CHEBI:597326"/>
    </cofactor>
</comment>
<comment type="pathway">
    <text>Amino-acid biosynthesis; L-threonine biosynthesis; L-threonine from L-aspartate: step 5/5.</text>
</comment>
<comment type="similarity">
    <text evidence="2">Belongs to the threonine synthase family.</text>
</comment>
<accession>P27735</accession>
<evidence type="ECO:0000250" key="1"/>
<evidence type="ECO:0000305" key="2"/>
<protein>
    <recommendedName>
        <fullName>Threonine synthase</fullName>
        <shortName>TS</shortName>
        <ecNumber>4.2.3.1</ecNumber>
    </recommendedName>
</protein>
<gene>
    <name type="primary">thrC</name>
</gene>
<reference key="1">
    <citation type="journal article" date="1993" name="J. Bacteriol.">
        <title>Nucleotide sequence of the Serratia marcescens threonine operon and analysis of the threonine operon mutations which alter feedback inhibition of both aspartokinase I and homoserine dehydrogenase I.</title>
        <authorList>
            <person name="Omori K."/>
            <person name="Suzuki S."/>
            <person name="Komatsubara S."/>
        </authorList>
    </citation>
    <scope>NUCLEOTIDE SEQUENCE [GENOMIC DNA]</scope>
    <source>
        <strain>Sr41</strain>
    </source>
</reference>
<proteinExistence type="inferred from homology"/>